<dbReference type="EMBL" id="AY665261">
    <property type="protein sequence ID" value="AAV74299.1"/>
    <property type="molecule type" value="mRNA"/>
</dbReference>
<dbReference type="RefSeq" id="NP_001009816.1">
    <property type="nucleotide sequence ID" value="NM_001009816.1"/>
</dbReference>
<dbReference type="SMR" id="Q5IS67"/>
<dbReference type="FunCoup" id="Q5IS67">
    <property type="interactions" value="337"/>
</dbReference>
<dbReference type="STRING" id="9598.ENSPTRP00000026293"/>
<dbReference type="PaxDb" id="9598-ENSPTRP00000026293"/>
<dbReference type="Ensembl" id="ENSPTRT00000085660.1">
    <property type="protein sequence ID" value="ENSPTRP00000082104.1"/>
    <property type="gene ID" value="ENSPTRG00000015246.7"/>
</dbReference>
<dbReference type="GeneID" id="460599"/>
<dbReference type="KEGG" id="ptr:460599"/>
<dbReference type="CTD" id="2596"/>
<dbReference type="VGNC" id="VGNC:11399">
    <property type="gene designation" value="GAP43"/>
</dbReference>
<dbReference type="eggNOG" id="ENOG502RXWF">
    <property type="taxonomic scope" value="Eukaryota"/>
</dbReference>
<dbReference type="GeneTree" id="ENSGT00730000111265"/>
<dbReference type="HOGENOM" id="CLU_102989_0_0_1"/>
<dbReference type="InParanoid" id="Q5IS67"/>
<dbReference type="OMA" id="TNQAKTP"/>
<dbReference type="TreeFam" id="TF333213"/>
<dbReference type="Proteomes" id="UP000002277">
    <property type="component" value="Chromosome 3"/>
</dbReference>
<dbReference type="Bgee" id="ENSPTRG00000015246">
    <property type="expression patterns" value="Expressed in Brodmann (1909) area 10 and 13 other cell types or tissues"/>
</dbReference>
<dbReference type="GO" id="GO:0005737">
    <property type="term" value="C:cytoplasm"/>
    <property type="evidence" value="ECO:0000318"/>
    <property type="project" value="GO_Central"/>
</dbReference>
<dbReference type="GO" id="GO:0030425">
    <property type="term" value="C:dendrite"/>
    <property type="evidence" value="ECO:0007669"/>
    <property type="project" value="UniProtKB-SubCell"/>
</dbReference>
<dbReference type="GO" id="GO:0031527">
    <property type="term" value="C:filopodium membrane"/>
    <property type="evidence" value="ECO:0007669"/>
    <property type="project" value="UniProtKB-SubCell"/>
</dbReference>
<dbReference type="GO" id="GO:0032584">
    <property type="term" value="C:growth cone membrane"/>
    <property type="evidence" value="ECO:0007669"/>
    <property type="project" value="UniProtKB-SubCell"/>
</dbReference>
<dbReference type="GO" id="GO:0043204">
    <property type="term" value="C:perikaryon"/>
    <property type="evidence" value="ECO:0007669"/>
    <property type="project" value="UniProtKB-SubCell"/>
</dbReference>
<dbReference type="GO" id="GO:0005886">
    <property type="term" value="C:plasma membrane"/>
    <property type="evidence" value="ECO:0000318"/>
    <property type="project" value="GO_Central"/>
</dbReference>
<dbReference type="GO" id="GO:0014069">
    <property type="term" value="C:postsynaptic density"/>
    <property type="evidence" value="ECO:0000318"/>
    <property type="project" value="GO_Central"/>
</dbReference>
<dbReference type="GO" id="GO:0005516">
    <property type="term" value="F:calmodulin binding"/>
    <property type="evidence" value="ECO:0000318"/>
    <property type="project" value="GO_Central"/>
</dbReference>
<dbReference type="GO" id="GO:0035727">
    <property type="term" value="F:lysophosphatidic acid binding"/>
    <property type="evidence" value="ECO:0000318"/>
    <property type="project" value="GO_Central"/>
</dbReference>
<dbReference type="GO" id="GO:1901981">
    <property type="term" value="F:phosphatidylinositol phosphate binding"/>
    <property type="evidence" value="ECO:0000318"/>
    <property type="project" value="GO_Central"/>
</dbReference>
<dbReference type="GO" id="GO:0001786">
    <property type="term" value="F:phosphatidylserine binding"/>
    <property type="evidence" value="ECO:0000318"/>
    <property type="project" value="GO_Central"/>
</dbReference>
<dbReference type="GO" id="GO:0016198">
    <property type="term" value="P:axon choice point recognition"/>
    <property type="evidence" value="ECO:0000318"/>
    <property type="project" value="GO_Central"/>
</dbReference>
<dbReference type="GO" id="GO:0031103">
    <property type="term" value="P:axon regeneration"/>
    <property type="evidence" value="ECO:0000318"/>
    <property type="project" value="GO_Central"/>
</dbReference>
<dbReference type="GO" id="GO:0040008">
    <property type="term" value="P:regulation of growth"/>
    <property type="evidence" value="ECO:0007669"/>
    <property type="project" value="InterPro"/>
</dbReference>
<dbReference type="GO" id="GO:0042246">
    <property type="term" value="P:tissue regeneration"/>
    <property type="evidence" value="ECO:0000318"/>
    <property type="project" value="GO_Central"/>
</dbReference>
<dbReference type="CDD" id="cd23767">
    <property type="entry name" value="IQCD"/>
    <property type="match status" value="1"/>
</dbReference>
<dbReference type="FunFam" id="1.20.5.190:FF:000044">
    <property type="entry name" value="Neuromodulin isoform 1"/>
    <property type="match status" value="1"/>
</dbReference>
<dbReference type="Gene3D" id="1.20.5.190">
    <property type="match status" value="1"/>
</dbReference>
<dbReference type="InterPro" id="IPR000048">
    <property type="entry name" value="IQ_motif_EF-hand-BS"/>
</dbReference>
<dbReference type="InterPro" id="IPR001422">
    <property type="entry name" value="Neuromodulin"/>
</dbReference>
<dbReference type="InterPro" id="IPR017454">
    <property type="entry name" value="Neuromodulin_C"/>
</dbReference>
<dbReference type="InterPro" id="IPR018947">
    <property type="entry name" value="Neuromodulin_gap-junction_N"/>
</dbReference>
<dbReference type="InterPro" id="IPR033137">
    <property type="entry name" value="Neuromodulin_P_site"/>
</dbReference>
<dbReference type="InterPro" id="IPR018243">
    <property type="entry name" value="Neuromodulin_palmitoyl_site"/>
</dbReference>
<dbReference type="PANTHER" id="PTHR10699">
    <property type="entry name" value="NEUROMODULIN"/>
    <property type="match status" value="1"/>
</dbReference>
<dbReference type="PANTHER" id="PTHR10699:SF15">
    <property type="entry name" value="NEUROMODULIN"/>
    <property type="match status" value="1"/>
</dbReference>
<dbReference type="Pfam" id="PF00612">
    <property type="entry name" value="IQ"/>
    <property type="match status" value="1"/>
</dbReference>
<dbReference type="Pfam" id="PF06614">
    <property type="entry name" value="Neuromodulin"/>
    <property type="match status" value="1"/>
</dbReference>
<dbReference type="Pfam" id="PF10580">
    <property type="entry name" value="Neuromodulin_N"/>
    <property type="match status" value="1"/>
</dbReference>
<dbReference type="PRINTS" id="PR00215">
    <property type="entry name" value="NEUROMODULIN"/>
</dbReference>
<dbReference type="SMART" id="SM00015">
    <property type="entry name" value="IQ"/>
    <property type="match status" value="1"/>
</dbReference>
<dbReference type="PROSITE" id="PS50096">
    <property type="entry name" value="IQ"/>
    <property type="match status" value="1"/>
</dbReference>
<dbReference type="PROSITE" id="PS00412">
    <property type="entry name" value="NEUROMODULIN_1"/>
    <property type="match status" value="1"/>
</dbReference>
<dbReference type="PROSITE" id="PS00413">
    <property type="entry name" value="NEUROMODULIN_2"/>
    <property type="match status" value="1"/>
</dbReference>
<proteinExistence type="evidence at transcript level"/>
<accession>Q5IS67</accession>
<name>NEUM_PANTR</name>
<evidence type="ECO:0000250" key="1">
    <source>
        <dbReference type="UniProtKB" id="P06836"/>
    </source>
</evidence>
<evidence type="ECO:0000250" key="2">
    <source>
        <dbReference type="UniProtKB" id="P06837"/>
    </source>
</evidence>
<evidence type="ECO:0000250" key="3">
    <source>
        <dbReference type="UniProtKB" id="P07936"/>
    </source>
</evidence>
<evidence type="ECO:0000250" key="4">
    <source>
        <dbReference type="UniProtKB" id="P17677"/>
    </source>
</evidence>
<evidence type="ECO:0000255" key="5">
    <source>
        <dbReference type="PROSITE-ProRule" id="PRU00116"/>
    </source>
</evidence>
<evidence type="ECO:0000256" key="6">
    <source>
        <dbReference type="SAM" id="MobiDB-lite"/>
    </source>
</evidence>
<evidence type="ECO:0000305" key="7"/>
<gene>
    <name type="primary">GAP43</name>
</gene>
<organism>
    <name type="scientific">Pan troglodytes</name>
    <name type="common">Chimpanzee</name>
    <dbReference type="NCBI Taxonomy" id="9598"/>
    <lineage>
        <taxon>Eukaryota</taxon>
        <taxon>Metazoa</taxon>
        <taxon>Chordata</taxon>
        <taxon>Craniata</taxon>
        <taxon>Vertebrata</taxon>
        <taxon>Euteleostomi</taxon>
        <taxon>Mammalia</taxon>
        <taxon>Eutheria</taxon>
        <taxon>Euarchontoglires</taxon>
        <taxon>Primates</taxon>
        <taxon>Haplorrhini</taxon>
        <taxon>Catarrhini</taxon>
        <taxon>Hominidae</taxon>
        <taxon>Pan</taxon>
    </lineage>
</organism>
<reference key="1">
    <citation type="journal article" date="2004" name="Cell">
        <title>Accelerated evolution of nervous system genes in the origin of Homo sapiens.</title>
        <authorList>
            <person name="Dorus S."/>
            <person name="Vallender E.J."/>
            <person name="Evans P.D."/>
            <person name="Anderson J.R."/>
            <person name="Gilbert S.L."/>
            <person name="Mahowald M."/>
            <person name="Wyckoff G.J."/>
            <person name="Malcom C.M."/>
            <person name="Lahn B.T."/>
        </authorList>
    </citation>
    <scope>NUCLEOTIDE SEQUENCE [MRNA]</scope>
</reference>
<protein>
    <recommendedName>
        <fullName>Neuromodulin</fullName>
    </recommendedName>
    <alternativeName>
        <fullName>Axonal membrane protein GAP-43</fullName>
    </alternativeName>
    <alternativeName>
        <fullName>Growth-associated protein 43</fullName>
    </alternativeName>
</protein>
<comment type="function">
    <text evidence="4">This protein is associated with nerve growth. It is a major component of the motile 'growth cones' that form the tips of elongating axons. Plays a role in axonal and dendritic filopodia induction (By similarity).</text>
</comment>
<comment type="subunit">
    <text evidence="1 2">Identified in a complex containing FGFR4, NCAM1, CDH2, PLCG1, FRS2, SRC, SHC1, GAP43 and CTTN (By similarity). Interacts (via IQ domain) with calmodulin (By similarity). Binds calmodulin with a greater affinity in the absence of Ca(2+) than in its presence (By similarity).</text>
</comment>
<comment type="subcellular location">
    <subcellularLocation>
        <location evidence="4">Cell membrane</location>
        <topology evidence="4">Peripheral membrane protein</topology>
        <orientation evidence="4">Cytoplasmic side</orientation>
    </subcellularLocation>
    <subcellularLocation>
        <location evidence="4">Cell projection</location>
        <location evidence="4">Growth cone membrane</location>
        <topology evidence="4">Peripheral membrane protein</topology>
        <orientation evidence="4">Cytoplasmic side</orientation>
    </subcellularLocation>
    <subcellularLocation>
        <location evidence="4">Synapse</location>
    </subcellularLocation>
    <subcellularLocation>
        <location evidence="4">Cell projection</location>
        <location evidence="4">Filopodium membrane</location>
        <topology evidence="4">Peripheral membrane protein</topology>
    </subcellularLocation>
    <subcellularLocation>
        <location evidence="3">Perikaryon</location>
    </subcellularLocation>
    <subcellularLocation>
        <location evidence="3">Cell projection</location>
        <location evidence="3">Dendrite</location>
    </subcellularLocation>
    <subcellularLocation>
        <location evidence="3">Cell projection</location>
        <location evidence="3">Axon</location>
    </subcellularLocation>
    <subcellularLocation>
        <location evidence="3">Cytoplasm</location>
    </subcellularLocation>
    <text evidence="4">Cytoplasmic surface of growth cone and synaptic plasma membranes.</text>
</comment>
<comment type="PTM">
    <text evidence="3">Phosphorylated (By similarity). Phosphorylation of this protein by a protein kinase C is specifically correlated with certain forms of synaptic plasticity (By similarity).</text>
</comment>
<comment type="PTM">
    <text evidence="2 4">Palmitoylated by ZDHHC3 (By similarity). Palmitoylation is regulated by ARF6 and is essential for plasma membrane association and axonal and dendritic filopodia induction. Deacylated by LYPLA2 (By similarity).</text>
</comment>
<comment type="similarity">
    <text evidence="7">Belongs to the neuromodulin family.</text>
</comment>
<keyword id="KW-0112">Calmodulin-binding</keyword>
<keyword id="KW-1003">Cell membrane</keyword>
<keyword id="KW-0966">Cell projection</keyword>
<keyword id="KW-0963">Cytoplasm</keyword>
<keyword id="KW-0217">Developmental protein</keyword>
<keyword id="KW-0221">Differentiation</keyword>
<keyword id="KW-0341">Growth regulation</keyword>
<keyword id="KW-0449">Lipoprotein</keyword>
<keyword id="KW-0472">Membrane</keyword>
<keyword id="KW-0524">Neurogenesis</keyword>
<keyword id="KW-0564">Palmitate</keyword>
<keyword id="KW-0597">Phosphoprotein</keyword>
<keyword id="KW-1185">Reference proteome</keyword>
<keyword id="KW-0770">Synapse</keyword>
<sequence>MLCCMRRTKQVEKNDDDQKIEQDGIKPEDKAHKAATKIQASFRGHITRKKLKGEKKDDVQAAEAEANKKDEAPVADGVEKKGEGTTTAEAAPATGSKPDEPGKAGETPSEEKKGEGDAATEQAAPQAPASSEEKAGSAETESATKASTDNSPSSKAEDAPAKEEPKQADVPAAVTAAAATTPAAEDAAAKATAQPPTETGESSQAEENIEAVDETKPKESARQDEGKEEEPEADQEHA</sequence>
<feature type="chain" id="PRO_0000159598" description="Neuromodulin">
    <location>
        <begin position="1"/>
        <end position="238"/>
    </location>
</feature>
<feature type="domain" description="IQ" evidence="5">
    <location>
        <begin position="31"/>
        <end position="60"/>
    </location>
</feature>
<feature type="region of interest" description="Disordered" evidence="6">
    <location>
        <begin position="1"/>
        <end position="238"/>
    </location>
</feature>
<feature type="compositionally biased region" description="Basic and acidic residues" evidence="6">
    <location>
        <begin position="9"/>
        <end position="32"/>
    </location>
</feature>
<feature type="compositionally biased region" description="Basic and acidic residues" evidence="6">
    <location>
        <begin position="54"/>
        <end position="83"/>
    </location>
</feature>
<feature type="compositionally biased region" description="Low complexity" evidence="6">
    <location>
        <begin position="84"/>
        <end position="95"/>
    </location>
</feature>
<feature type="compositionally biased region" description="Basic and acidic residues" evidence="6">
    <location>
        <begin position="97"/>
        <end position="116"/>
    </location>
</feature>
<feature type="compositionally biased region" description="Low complexity" evidence="6">
    <location>
        <begin position="119"/>
        <end position="130"/>
    </location>
</feature>
<feature type="compositionally biased region" description="Polar residues" evidence="6">
    <location>
        <begin position="139"/>
        <end position="154"/>
    </location>
</feature>
<feature type="compositionally biased region" description="Basic and acidic residues" evidence="6">
    <location>
        <begin position="155"/>
        <end position="167"/>
    </location>
</feature>
<feature type="compositionally biased region" description="Low complexity" evidence="6">
    <location>
        <begin position="168"/>
        <end position="199"/>
    </location>
</feature>
<feature type="compositionally biased region" description="Basic and acidic residues" evidence="6">
    <location>
        <begin position="213"/>
        <end position="225"/>
    </location>
</feature>
<feature type="compositionally biased region" description="Acidic residues" evidence="6">
    <location>
        <begin position="226"/>
        <end position="238"/>
    </location>
</feature>
<feature type="modified residue" description="Phosphoserine; by PHK and PKC" evidence="1">
    <location>
        <position position="41"/>
    </location>
</feature>
<feature type="modified residue" description="Phosphoserine" evidence="2">
    <location>
        <position position="151"/>
    </location>
</feature>
<feature type="modified residue" description="Phosphoserine" evidence="2">
    <location>
        <position position="153"/>
    </location>
</feature>
<feature type="modified residue" description="Phosphoserine" evidence="2">
    <location>
        <position position="154"/>
    </location>
</feature>
<feature type="modified residue" description="Phosphothreonine" evidence="2">
    <location>
        <position position="181"/>
    </location>
</feature>
<feature type="modified residue" description="Phosphoserine; by CK2" evidence="1">
    <location>
        <position position="202"/>
    </location>
</feature>
<feature type="modified residue" description="Phosphoserine; by CK2" evidence="1">
    <location>
        <position position="203"/>
    </location>
</feature>
<feature type="lipid moiety-binding region" description="S-palmitoyl cysteine" evidence="1">
    <location>
        <position position="3"/>
    </location>
</feature>
<feature type="lipid moiety-binding region" description="S-palmitoyl cysteine" evidence="1">
    <location>
        <position position="4"/>
    </location>
</feature>